<evidence type="ECO:0000255" key="1">
    <source>
        <dbReference type="HAMAP-Rule" id="MF_01820"/>
    </source>
</evidence>
<evidence type="ECO:0000255" key="2">
    <source>
        <dbReference type="PROSITE-ProRule" id="PRU01058"/>
    </source>
</evidence>
<evidence type="ECO:0000256" key="3">
    <source>
        <dbReference type="SAM" id="MobiDB-lite"/>
    </source>
</evidence>
<evidence type="ECO:0000305" key="4"/>
<feature type="chain" id="PRO_0000008159" description="Small ribosomal subunit biogenesis GTPase RsgA">
    <location>
        <begin position="1"/>
        <end position="350"/>
    </location>
</feature>
<feature type="domain" description="CP-type G" evidence="2">
    <location>
        <begin position="104"/>
        <end position="273"/>
    </location>
</feature>
<feature type="region of interest" description="Disordered" evidence="3">
    <location>
        <begin position="1"/>
        <end position="33"/>
    </location>
</feature>
<feature type="compositionally biased region" description="Polar residues" evidence="3">
    <location>
        <begin position="1"/>
        <end position="17"/>
    </location>
</feature>
<feature type="binding site" evidence="1">
    <location>
        <begin position="160"/>
        <end position="163"/>
    </location>
    <ligand>
        <name>GTP</name>
        <dbReference type="ChEBI" id="CHEBI:37565"/>
    </ligand>
</feature>
<feature type="binding site" evidence="1">
    <location>
        <begin position="214"/>
        <end position="222"/>
    </location>
    <ligand>
        <name>GTP</name>
        <dbReference type="ChEBI" id="CHEBI:37565"/>
    </ligand>
</feature>
<feature type="binding site" evidence="1">
    <location>
        <position position="297"/>
    </location>
    <ligand>
        <name>Zn(2+)</name>
        <dbReference type="ChEBI" id="CHEBI:29105"/>
    </ligand>
</feature>
<feature type="binding site" evidence="1">
    <location>
        <position position="302"/>
    </location>
    <ligand>
        <name>Zn(2+)</name>
        <dbReference type="ChEBI" id="CHEBI:29105"/>
    </ligand>
</feature>
<feature type="binding site" evidence="1">
    <location>
        <position position="304"/>
    </location>
    <ligand>
        <name>Zn(2+)</name>
        <dbReference type="ChEBI" id="CHEBI:29105"/>
    </ligand>
</feature>
<feature type="binding site" evidence="1">
    <location>
        <position position="310"/>
    </location>
    <ligand>
        <name>Zn(2+)</name>
        <dbReference type="ChEBI" id="CHEBI:29105"/>
    </ligand>
</feature>
<feature type="sequence conflict" description="In Ref. 2; AAP19519." evidence="4" ref="2">
    <original>A</original>
    <variation>E</variation>
    <location>
        <position position="202"/>
    </location>
</feature>
<keyword id="KW-0963">Cytoplasm</keyword>
<keyword id="KW-0342">GTP-binding</keyword>
<keyword id="KW-0378">Hydrolase</keyword>
<keyword id="KW-0479">Metal-binding</keyword>
<keyword id="KW-0547">Nucleotide-binding</keyword>
<keyword id="KW-1185">Reference proteome</keyword>
<keyword id="KW-0690">Ribosome biogenesis</keyword>
<keyword id="KW-0694">RNA-binding</keyword>
<keyword id="KW-0699">rRNA-binding</keyword>
<keyword id="KW-0862">Zinc</keyword>
<proteinExistence type="inferred from homology"/>
<reference key="1">
    <citation type="journal article" date="2002" name="Nucleic Acids Res.">
        <title>Genome sequence of Shigella flexneri 2a: insights into pathogenicity through comparison with genomes of Escherichia coli K12 and O157.</title>
        <authorList>
            <person name="Jin Q."/>
            <person name="Yuan Z."/>
            <person name="Xu J."/>
            <person name="Wang Y."/>
            <person name="Shen Y."/>
            <person name="Lu W."/>
            <person name="Wang J."/>
            <person name="Liu H."/>
            <person name="Yang J."/>
            <person name="Yang F."/>
            <person name="Zhang X."/>
            <person name="Zhang J."/>
            <person name="Yang G."/>
            <person name="Wu H."/>
            <person name="Qu D."/>
            <person name="Dong J."/>
            <person name="Sun L."/>
            <person name="Xue Y."/>
            <person name="Zhao A."/>
            <person name="Gao Y."/>
            <person name="Zhu J."/>
            <person name="Kan B."/>
            <person name="Ding K."/>
            <person name="Chen S."/>
            <person name="Cheng H."/>
            <person name="Yao Z."/>
            <person name="He B."/>
            <person name="Chen R."/>
            <person name="Ma D."/>
            <person name="Qiang B."/>
            <person name="Wen Y."/>
            <person name="Hou Y."/>
            <person name="Yu J."/>
        </authorList>
    </citation>
    <scope>NUCLEOTIDE SEQUENCE [LARGE SCALE GENOMIC DNA]</scope>
    <source>
        <strain>301 / Serotype 2a</strain>
    </source>
</reference>
<reference key="2">
    <citation type="journal article" date="2003" name="Infect. Immun.">
        <title>Complete genome sequence and comparative genomics of Shigella flexneri serotype 2a strain 2457T.</title>
        <authorList>
            <person name="Wei J."/>
            <person name="Goldberg M.B."/>
            <person name="Burland V."/>
            <person name="Venkatesan M.M."/>
            <person name="Deng W."/>
            <person name="Fournier G."/>
            <person name="Mayhew G.F."/>
            <person name="Plunkett G. III"/>
            <person name="Rose D.J."/>
            <person name="Darling A."/>
            <person name="Mau B."/>
            <person name="Perna N.T."/>
            <person name="Payne S.M."/>
            <person name="Runyen-Janecky L.J."/>
            <person name="Zhou S."/>
            <person name="Schwartz D.C."/>
            <person name="Blattner F.R."/>
        </authorList>
    </citation>
    <scope>NUCLEOTIDE SEQUENCE [LARGE SCALE GENOMIC DNA]</scope>
    <source>
        <strain>ATCC 700930 / 2457T / Serotype 2a</strain>
    </source>
</reference>
<accession>Q83IK0</accession>
<accession>Q7UAL5</accession>
<organism>
    <name type="scientific">Shigella flexneri</name>
    <dbReference type="NCBI Taxonomy" id="623"/>
    <lineage>
        <taxon>Bacteria</taxon>
        <taxon>Pseudomonadati</taxon>
        <taxon>Pseudomonadota</taxon>
        <taxon>Gammaproteobacteria</taxon>
        <taxon>Enterobacterales</taxon>
        <taxon>Enterobacteriaceae</taxon>
        <taxon>Shigella</taxon>
    </lineage>
</organism>
<protein>
    <recommendedName>
        <fullName evidence="1">Small ribosomal subunit biogenesis GTPase RsgA</fullName>
        <ecNumber evidence="1">3.6.1.-</ecNumber>
    </recommendedName>
</protein>
<sequence length="350" mass="39121">MSKNKLSKGQQRRVNANHQRRLKTSKEKPDYDDNLFGEPDEGIVISRFGMHADVESADGDVHRCNIRRTIRSLVTGDRVVWRPGKPAAEGVNVKGIVEAVHERTSVLTRPDFYDGVKPIAANIDQIVIVSAILPELSLNIIDRYLVACETLQIEPIIVLNKIDLLDDEGMAFVNEQMDIYRNIGYRVLMVSSHTQDGLKPLAEALTGRISIFAGQSGVGKSSLLNALLGLQKEILTNDVSDNSGLGQHTTTAARLYHFPHGGDVIDSPGVREFGLWHLEPEQITQGFVEFHDYLGLCKYRDCKHDTDPGCAIREAVEEGKIAETRFENYHRILESMAQVKTRKNFSDTDD</sequence>
<dbReference type="EC" id="3.6.1.-" evidence="1"/>
<dbReference type="EMBL" id="AE005674">
    <property type="protein sequence ID" value="AAN45736.1"/>
    <property type="status" value="ALT_INIT"/>
    <property type="molecule type" value="Genomic_DNA"/>
</dbReference>
<dbReference type="EMBL" id="AE014073">
    <property type="protein sequence ID" value="AAP19519.1"/>
    <property type="status" value="ALT_INIT"/>
    <property type="molecule type" value="Genomic_DNA"/>
</dbReference>
<dbReference type="RefSeq" id="WP_000041962.1">
    <property type="nucleotide sequence ID" value="NZ_CP123365.1"/>
</dbReference>
<dbReference type="SMR" id="Q83IK0"/>
<dbReference type="STRING" id="198214.SF4320"/>
<dbReference type="PaxDb" id="198214-SF4320"/>
<dbReference type="KEGG" id="sfl:SF4320"/>
<dbReference type="KEGG" id="sfx:S4583"/>
<dbReference type="PATRIC" id="fig|198214.7.peg.5093"/>
<dbReference type="HOGENOM" id="CLU_033617_2_0_6"/>
<dbReference type="Proteomes" id="UP000001006">
    <property type="component" value="Chromosome"/>
</dbReference>
<dbReference type="Proteomes" id="UP000002673">
    <property type="component" value="Chromosome"/>
</dbReference>
<dbReference type="GO" id="GO:0005737">
    <property type="term" value="C:cytoplasm"/>
    <property type="evidence" value="ECO:0007669"/>
    <property type="project" value="UniProtKB-SubCell"/>
</dbReference>
<dbReference type="GO" id="GO:0005525">
    <property type="term" value="F:GTP binding"/>
    <property type="evidence" value="ECO:0007669"/>
    <property type="project" value="UniProtKB-UniRule"/>
</dbReference>
<dbReference type="GO" id="GO:0003924">
    <property type="term" value="F:GTPase activity"/>
    <property type="evidence" value="ECO:0007669"/>
    <property type="project" value="UniProtKB-UniRule"/>
</dbReference>
<dbReference type="GO" id="GO:0046872">
    <property type="term" value="F:metal ion binding"/>
    <property type="evidence" value="ECO:0007669"/>
    <property type="project" value="UniProtKB-KW"/>
</dbReference>
<dbReference type="GO" id="GO:0019843">
    <property type="term" value="F:rRNA binding"/>
    <property type="evidence" value="ECO:0007669"/>
    <property type="project" value="UniProtKB-KW"/>
</dbReference>
<dbReference type="GO" id="GO:0042274">
    <property type="term" value="P:ribosomal small subunit biogenesis"/>
    <property type="evidence" value="ECO:0007669"/>
    <property type="project" value="UniProtKB-UniRule"/>
</dbReference>
<dbReference type="CDD" id="cd01854">
    <property type="entry name" value="YjeQ_EngC"/>
    <property type="match status" value="1"/>
</dbReference>
<dbReference type="FunFam" id="1.10.40.50:FF:000001">
    <property type="entry name" value="Small ribosomal subunit biogenesis GTPase RsgA"/>
    <property type="match status" value="1"/>
</dbReference>
<dbReference type="FunFam" id="2.40.50.140:FF:000122">
    <property type="entry name" value="Small ribosomal subunit biogenesis GTPase RsgA"/>
    <property type="match status" value="1"/>
</dbReference>
<dbReference type="FunFam" id="3.40.50.300:FF:000389">
    <property type="entry name" value="Small ribosomal subunit biogenesis GTPase RsgA"/>
    <property type="match status" value="1"/>
</dbReference>
<dbReference type="Gene3D" id="2.40.50.140">
    <property type="entry name" value="Nucleic acid-binding proteins"/>
    <property type="match status" value="1"/>
</dbReference>
<dbReference type="Gene3D" id="3.40.50.300">
    <property type="entry name" value="P-loop containing nucleotide triphosphate hydrolases"/>
    <property type="match status" value="1"/>
</dbReference>
<dbReference type="Gene3D" id="1.10.40.50">
    <property type="entry name" value="Probable gtpase engc, domain 3"/>
    <property type="match status" value="1"/>
</dbReference>
<dbReference type="HAMAP" id="MF_01820">
    <property type="entry name" value="GTPase_RsgA"/>
    <property type="match status" value="1"/>
</dbReference>
<dbReference type="InterPro" id="IPR030378">
    <property type="entry name" value="G_CP_dom"/>
</dbReference>
<dbReference type="InterPro" id="IPR012340">
    <property type="entry name" value="NA-bd_OB-fold"/>
</dbReference>
<dbReference type="InterPro" id="IPR027417">
    <property type="entry name" value="P-loop_NTPase"/>
</dbReference>
<dbReference type="InterPro" id="IPR004881">
    <property type="entry name" value="Ribosome_biogen_GTPase_RsgA"/>
</dbReference>
<dbReference type="InterPro" id="IPR010914">
    <property type="entry name" value="RsgA_GTPase_dom"/>
</dbReference>
<dbReference type="NCBIfam" id="NF008931">
    <property type="entry name" value="PRK12288.1"/>
    <property type="match status" value="1"/>
</dbReference>
<dbReference type="NCBIfam" id="TIGR00157">
    <property type="entry name" value="ribosome small subunit-dependent GTPase A"/>
    <property type="match status" value="1"/>
</dbReference>
<dbReference type="PANTHER" id="PTHR32120">
    <property type="entry name" value="SMALL RIBOSOMAL SUBUNIT BIOGENESIS GTPASE RSGA"/>
    <property type="match status" value="1"/>
</dbReference>
<dbReference type="PANTHER" id="PTHR32120:SF11">
    <property type="entry name" value="SMALL RIBOSOMAL SUBUNIT BIOGENESIS GTPASE RSGA 1, MITOCHONDRIAL-RELATED"/>
    <property type="match status" value="1"/>
</dbReference>
<dbReference type="Pfam" id="PF03193">
    <property type="entry name" value="RsgA_GTPase"/>
    <property type="match status" value="1"/>
</dbReference>
<dbReference type="SUPFAM" id="SSF52540">
    <property type="entry name" value="P-loop containing nucleoside triphosphate hydrolases"/>
    <property type="match status" value="1"/>
</dbReference>
<dbReference type="PROSITE" id="PS50936">
    <property type="entry name" value="ENGC_GTPASE"/>
    <property type="match status" value="1"/>
</dbReference>
<dbReference type="PROSITE" id="PS51721">
    <property type="entry name" value="G_CP"/>
    <property type="match status" value="1"/>
</dbReference>
<gene>
    <name evidence="1" type="primary">rsgA</name>
    <name type="ordered locus">SF4320</name>
    <name type="ordered locus">S4583</name>
</gene>
<name>RSGA_SHIFL</name>
<comment type="function">
    <text evidence="1">One of several proteins that assist in the late maturation steps of the functional core of the 30S ribosomal subunit. Helps release RbfA from mature subunits. May play a role in the assembly of ribosomal proteins into the subunit. Circularly permuted GTPase that catalyzes slow GTP hydrolysis, GTPase activity is stimulated by the 30S ribosomal subunit.</text>
</comment>
<comment type="cofactor">
    <cofactor evidence="1">
        <name>Zn(2+)</name>
        <dbReference type="ChEBI" id="CHEBI:29105"/>
    </cofactor>
    <text evidence="1">Binds 1 zinc ion per subunit.</text>
</comment>
<comment type="subunit">
    <text evidence="1">Monomer. Associates with 30S ribosomal subunit, binds 16S rRNA.</text>
</comment>
<comment type="subcellular location">
    <subcellularLocation>
        <location evidence="1">Cytoplasm</location>
    </subcellularLocation>
</comment>
<comment type="similarity">
    <text evidence="1">Belongs to the TRAFAC class YlqF/YawG GTPase family. RsgA subfamily.</text>
</comment>
<comment type="sequence caution" evidence="4">
    <conflict type="erroneous initiation">
        <sequence resource="EMBL-CDS" id="AAN45736"/>
    </conflict>
    <text>Extended N-terminus.</text>
</comment>
<comment type="sequence caution" evidence="4">
    <conflict type="erroneous initiation">
        <sequence resource="EMBL-CDS" id="AAP19519"/>
    </conflict>
    <text>Truncated N-terminus.</text>
</comment>